<protein>
    <recommendedName>
        <fullName evidence="10">Kinesin-like protein KIF14</fullName>
    </recommendedName>
</protein>
<gene>
    <name evidence="9 12" type="primary">Kif14</name>
</gene>
<dbReference type="EMBL" id="AB731728">
    <property type="protein sequence ID" value="BAM74185.1"/>
    <property type="molecule type" value="mRNA"/>
</dbReference>
<dbReference type="EMBL" id="AC122127">
    <property type="status" value="NOT_ANNOTATED_CDS"/>
    <property type="molecule type" value="Genomic_DNA"/>
</dbReference>
<dbReference type="EMBL" id="AC126606">
    <property type="status" value="NOT_ANNOTATED_CDS"/>
    <property type="molecule type" value="Genomic_DNA"/>
</dbReference>
<dbReference type="CCDS" id="CCDS78693.1"/>
<dbReference type="RefSeq" id="NP_001274108.1">
    <property type="nucleotide sequence ID" value="NM_001287179.2"/>
</dbReference>
<dbReference type="RefSeq" id="XP_006529792.1">
    <property type="nucleotide sequence ID" value="XM_006529729.5"/>
</dbReference>
<dbReference type="PDB" id="4OZQ">
    <property type="method" value="X-ray"/>
    <property type="resolution" value="2.71 A"/>
    <property type="chains" value="A/B=390-738"/>
</dbReference>
<dbReference type="PDB" id="6WWE">
    <property type="method" value="EM"/>
    <property type="resolution" value="3.90 A"/>
    <property type="chains" value="K=391-772"/>
</dbReference>
<dbReference type="PDB" id="6WWF">
    <property type="method" value="EM"/>
    <property type="resolution" value="3.30 A"/>
    <property type="chains" value="K=391-772"/>
</dbReference>
<dbReference type="PDB" id="6WWG">
    <property type="method" value="EM"/>
    <property type="resolution" value="2.90 A"/>
    <property type="chains" value="K/N=391-772"/>
</dbReference>
<dbReference type="PDB" id="6WWH">
    <property type="method" value="EM"/>
    <property type="resolution" value="3.80 A"/>
    <property type="chains" value="K/N=391-772"/>
</dbReference>
<dbReference type="PDB" id="6WWI">
    <property type="method" value="EM"/>
    <property type="resolution" value="3.60 A"/>
    <property type="chains" value="K=391-755"/>
</dbReference>
<dbReference type="PDB" id="6WWJ">
    <property type="method" value="EM"/>
    <property type="resolution" value="3.40 A"/>
    <property type="chains" value="K=391-755"/>
</dbReference>
<dbReference type="PDB" id="6WWK">
    <property type="method" value="EM"/>
    <property type="resolution" value="3.00 A"/>
    <property type="chains" value="K/N=391-755"/>
</dbReference>
<dbReference type="PDB" id="6WWL">
    <property type="method" value="EM"/>
    <property type="resolution" value="3.10 A"/>
    <property type="chains" value="K/N=391-755"/>
</dbReference>
<dbReference type="PDB" id="6WWM">
    <property type="method" value="EM"/>
    <property type="resolution" value="2.80 A"/>
    <property type="chains" value="K=391-748"/>
</dbReference>
<dbReference type="PDB" id="6WWN">
    <property type="method" value="EM"/>
    <property type="resolution" value="3.50 A"/>
    <property type="chains" value="K=391-748"/>
</dbReference>
<dbReference type="PDB" id="6WWO">
    <property type="method" value="EM"/>
    <property type="resolution" value="2.80 A"/>
    <property type="chains" value="K=391-748"/>
</dbReference>
<dbReference type="PDB" id="6WWP">
    <property type="method" value="EM"/>
    <property type="resolution" value="3.10 A"/>
    <property type="chains" value="K=391-743"/>
</dbReference>
<dbReference type="PDB" id="6WWQ">
    <property type="method" value="EM"/>
    <property type="resolution" value="3.00 A"/>
    <property type="chains" value="K=391-743"/>
</dbReference>
<dbReference type="PDB" id="6WWR">
    <property type="method" value="EM"/>
    <property type="resolution" value="2.70 A"/>
    <property type="chains" value="K=391-743"/>
</dbReference>
<dbReference type="PDB" id="6WWS">
    <property type="method" value="EM"/>
    <property type="resolution" value="2.70 A"/>
    <property type="chains" value="K=391-743"/>
</dbReference>
<dbReference type="PDB" id="6WWT">
    <property type="method" value="EM"/>
    <property type="resolution" value="3.20 A"/>
    <property type="chains" value="K=391-735"/>
</dbReference>
<dbReference type="PDB" id="6WWU">
    <property type="method" value="EM"/>
    <property type="resolution" value="2.70 A"/>
    <property type="chains" value="K=391-735"/>
</dbReference>
<dbReference type="PDB" id="6WWV">
    <property type="method" value="EM"/>
    <property type="resolution" value="3.10 A"/>
    <property type="chains" value="K=391-735"/>
</dbReference>
<dbReference type="PDB" id="7LVQ">
    <property type="method" value="EM"/>
    <property type="resolution" value="2.90 A"/>
    <property type="chains" value="K=391-743"/>
</dbReference>
<dbReference type="PDB" id="7LVR">
    <property type="method" value="EM"/>
    <property type="resolution" value="2.90 A"/>
    <property type="chains" value="K=391-743"/>
</dbReference>
<dbReference type="PDBsum" id="4OZQ"/>
<dbReference type="PDBsum" id="6WWE"/>
<dbReference type="PDBsum" id="6WWF"/>
<dbReference type="PDBsum" id="6WWG"/>
<dbReference type="PDBsum" id="6WWH"/>
<dbReference type="PDBsum" id="6WWI"/>
<dbReference type="PDBsum" id="6WWJ"/>
<dbReference type="PDBsum" id="6WWK"/>
<dbReference type="PDBsum" id="6WWL"/>
<dbReference type="PDBsum" id="6WWM"/>
<dbReference type="PDBsum" id="6WWN"/>
<dbReference type="PDBsum" id="6WWO"/>
<dbReference type="PDBsum" id="6WWP"/>
<dbReference type="PDBsum" id="6WWQ"/>
<dbReference type="PDBsum" id="6WWR"/>
<dbReference type="PDBsum" id="6WWS"/>
<dbReference type="PDBsum" id="6WWT"/>
<dbReference type="PDBsum" id="6WWU"/>
<dbReference type="PDBsum" id="6WWV"/>
<dbReference type="PDBsum" id="7LVQ"/>
<dbReference type="PDBsum" id="7LVR"/>
<dbReference type="EMDB" id="EMD-21932"/>
<dbReference type="EMDB" id="EMD-21933"/>
<dbReference type="EMDB" id="EMD-21934"/>
<dbReference type="EMDB" id="EMD-21935"/>
<dbReference type="EMDB" id="EMD-21936"/>
<dbReference type="EMDB" id="EMD-21937"/>
<dbReference type="EMDB" id="EMD-21938"/>
<dbReference type="EMDB" id="EMD-21939"/>
<dbReference type="EMDB" id="EMD-21940"/>
<dbReference type="EMDB" id="EMD-21941"/>
<dbReference type="EMDB" id="EMD-21942"/>
<dbReference type="EMDB" id="EMD-21943"/>
<dbReference type="EMDB" id="EMD-21944"/>
<dbReference type="EMDB" id="EMD-21945"/>
<dbReference type="EMDB" id="EMD-21946"/>
<dbReference type="EMDB" id="EMD-21947"/>
<dbReference type="EMDB" id="EMD-21948"/>
<dbReference type="EMDB" id="EMD-21949"/>
<dbReference type="EMDB" id="EMD-23540"/>
<dbReference type="EMDB" id="EMD-23541"/>
<dbReference type="SMR" id="L0N7N1"/>
<dbReference type="FunCoup" id="L0N7N1">
    <property type="interactions" value="589"/>
</dbReference>
<dbReference type="STRING" id="10090.ENSMUSP00000139698"/>
<dbReference type="iPTMnet" id="L0N7N1"/>
<dbReference type="PhosphoSitePlus" id="L0N7N1"/>
<dbReference type="PaxDb" id="10090-ENSMUSP00000139698"/>
<dbReference type="ProteomicsDB" id="269217"/>
<dbReference type="Pumba" id="L0N7N1"/>
<dbReference type="Antibodypedia" id="20633">
    <property type="antibodies" value="158 antibodies from 21 providers"/>
</dbReference>
<dbReference type="DNASU" id="381293"/>
<dbReference type="Ensembl" id="ENSMUST00000189413.7">
    <property type="protein sequence ID" value="ENSMUSP00000139698.2"/>
    <property type="gene ID" value="ENSMUSG00000041498.15"/>
</dbReference>
<dbReference type="GeneID" id="381293"/>
<dbReference type="KEGG" id="mmu:381293"/>
<dbReference type="UCSC" id="uc007cuv.2">
    <property type="organism name" value="mouse"/>
</dbReference>
<dbReference type="AGR" id="MGI:1098226"/>
<dbReference type="CTD" id="9928"/>
<dbReference type="MGI" id="MGI:1098226">
    <property type="gene designation" value="Kif14"/>
</dbReference>
<dbReference type="VEuPathDB" id="HostDB:ENSMUSG00000041498"/>
<dbReference type="eggNOG" id="KOG0245">
    <property type="taxonomic scope" value="Eukaryota"/>
</dbReference>
<dbReference type="GeneTree" id="ENSGT00940000156834"/>
<dbReference type="InParanoid" id="L0N7N1"/>
<dbReference type="OMA" id="VVLIKHW"/>
<dbReference type="OrthoDB" id="3176171at2759"/>
<dbReference type="PhylomeDB" id="L0N7N1"/>
<dbReference type="Reactome" id="R-MMU-5625900">
    <property type="pathway name" value="RHO GTPases activate CIT"/>
</dbReference>
<dbReference type="Reactome" id="R-MMU-9696270">
    <property type="pathway name" value="RND2 GTPase cycle"/>
</dbReference>
<dbReference type="Reactome" id="R-MMU-9696273">
    <property type="pathway name" value="RND1 GTPase cycle"/>
</dbReference>
<dbReference type="SABIO-RK" id="L0N7N1"/>
<dbReference type="BioGRID-ORCS" id="381293">
    <property type="hits" value="16 hits in 73 CRISPR screens"/>
</dbReference>
<dbReference type="ChiTaRS" id="Kif14">
    <property type="organism name" value="mouse"/>
</dbReference>
<dbReference type="PRO" id="PR:L0N7N1"/>
<dbReference type="Proteomes" id="UP000000589">
    <property type="component" value="Chromosome 1"/>
</dbReference>
<dbReference type="RNAct" id="L0N7N1">
    <property type="molecule type" value="protein"/>
</dbReference>
<dbReference type="Bgee" id="ENSMUSG00000041498">
    <property type="expression patterns" value="Expressed in animal zygote and 54 other cell types or tissues"/>
</dbReference>
<dbReference type="ExpressionAtlas" id="L0N7N1">
    <property type="expression patterns" value="baseline and differential"/>
</dbReference>
<dbReference type="GO" id="GO:0005829">
    <property type="term" value="C:cytosol"/>
    <property type="evidence" value="ECO:0007669"/>
    <property type="project" value="Ensembl"/>
</dbReference>
<dbReference type="GO" id="GO:0090543">
    <property type="term" value="C:Flemming body"/>
    <property type="evidence" value="ECO:0007669"/>
    <property type="project" value="Ensembl"/>
</dbReference>
<dbReference type="GO" id="GO:0016020">
    <property type="term" value="C:membrane"/>
    <property type="evidence" value="ECO:0000250"/>
    <property type="project" value="UniProtKB"/>
</dbReference>
<dbReference type="GO" id="GO:0005874">
    <property type="term" value="C:microtubule"/>
    <property type="evidence" value="ECO:0000266"/>
    <property type="project" value="MGI"/>
</dbReference>
<dbReference type="GO" id="GO:0030496">
    <property type="term" value="C:midbody"/>
    <property type="evidence" value="ECO:0000250"/>
    <property type="project" value="UniProtKB"/>
</dbReference>
<dbReference type="GO" id="GO:0005634">
    <property type="term" value="C:nucleus"/>
    <property type="evidence" value="ECO:0007669"/>
    <property type="project" value="UniProtKB-SubCell"/>
</dbReference>
<dbReference type="GO" id="GO:0005886">
    <property type="term" value="C:plasma membrane"/>
    <property type="evidence" value="ECO:0007669"/>
    <property type="project" value="Ensembl"/>
</dbReference>
<dbReference type="GO" id="GO:0051233">
    <property type="term" value="C:spindle midzone"/>
    <property type="evidence" value="ECO:0000250"/>
    <property type="project" value="UniProtKB"/>
</dbReference>
<dbReference type="GO" id="GO:0005524">
    <property type="term" value="F:ATP binding"/>
    <property type="evidence" value="ECO:0000314"/>
    <property type="project" value="UniProtKB"/>
</dbReference>
<dbReference type="GO" id="GO:0016887">
    <property type="term" value="F:ATP hydrolysis activity"/>
    <property type="evidence" value="ECO:0000314"/>
    <property type="project" value="UniProtKB"/>
</dbReference>
<dbReference type="GO" id="GO:0008017">
    <property type="term" value="F:microtubule binding"/>
    <property type="evidence" value="ECO:0000314"/>
    <property type="project" value="UniProtKB"/>
</dbReference>
<dbReference type="GO" id="GO:0030165">
    <property type="term" value="F:PDZ domain binding"/>
    <property type="evidence" value="ECO:0000266"/>
    <property type="project" value="MGI"/>
</dbReference>
<dbReference type="GO" id="GO:0008574">
    <property type="term" value="F:plus-end-directed microtubule motor activity"/>
    <property type="evidence" value="ECO:0000314"/>
    <property type="project" value="UniProtKB"/>
</dbReference>
<dbReference type="GO" id="GO:0019901">
    <property type="term" value="F:protein kinase binding"/>
    <property type="evidence" value="ECO:0007669"/>
    <property type="project" value="Ensembl"/>
</dbReference>
<dbReference type="GO" id="GO:0015631">
    <property type="term" value="F:tubulin binding"/>
    <property type="evidence" value="ECO:0000314"/>
    <property type="project" value="UniProtKB"/>
</dbReference>
<dbReference type="GO" id="GO:0032147">
    <property type="term" value="P:activation of protein kinase activity"/>
    <property type="evidence" value="ECO:0000250"/>
    <property type="project" value="UniProtKB"/>
</dbReference>
<dbReference type="GO" id="GO:0051301">
    <property type="term" value="P:cell division"/>
    <property type="evidence" value="ECO:0000315"/>
    <property type="project" value="UniProtKB"/>
</dbReference>
<dbReference type="GO" id="GO:0021846">
    <property type="term" value="P:cell proliferation in forebrain"/>
    <property type="evidence" value="ECO:0000315"/>
    <property type="project" value="UniProtKB"/>
</dbReference>
<dbReference type="GO" id="GO:0021695">
    <property type="term" value="P:cerebellar cortex development"/>
    <property type="evidence" value="ECO:0000315"/>
    <property type="project" value="UniProtKB"/>
</dbReference>
<dbReference type="GO" id="GO:0021685">
    <property type="term" value="P:cerebellar granular layer structural organization"/>
    <property type="evidence" value="ECO:0000315"/>
    <property type="project" value="UniProtKB"/>
</dbReference>
<dbReference type="GO" id="GO:0021693">
    <property type="term" value="P:cerebellar Purkinje cell layer structural organization"/>
    <property type="evidence" value="ECO:0000315"/>
    <property type="project" value="UniProtKB"/>
</dbReference>
<dbReference type="GO" id="GO:0021987">
    <property type="term" value="P:cerebral cortex development"/>
    <property type="evidence" value="ECO:0000315"/>
    <property type="project" value="UniProtKB"/>
</dbReference>
<dbReference type="GO" id="GO:0045184">
    <property type="term" value="P:establishment of protein localization"/>
    <property type="evidence" value="ECO:0000266"/>
    <property type="project" value="MGI"/>
</dbReference>
<dbReference type="GO" id="GO:0021766">
    <property type="term" value="P:hippocampus development"/>
    <property type="evidence" value="ECO:0000315"/>
    <property type="project" value="UniProtKB"/>
</dbReference>
<dbReference type="GO" id="GO:0007018">
    <property type="term" value="P:microtubule-based movement"/>
    <property type="evidence" value="ECO:0007669"/>
    <property type="project" value="InterPro"/>
</dbReference>
<dbReference type="GO" id="GO:0007080">
    <property type="term" value="P:mitotic metaphase chromosome alignment"/>
    <property type="evidence" value="ECO:0000250"/>
    <property type="project" value="UniProtKB"/>
</dbReference>
<dbReference type="GO" id="GO:0043066">
    <property type="term" value="P:negative regulation of apoptotic process"/>
    <property type="evidence" value="ECO:0000250"/>
    <property type="project" value="UniProtKB"/>
</dbReference>
<dbReference type="GO" id="GO:0033624">
    <property type="term" value="P:negative regulation of integrin activation"/>
    <property type="evidence" value="ECO:0000266"/>
    <property type="project" value="MGI"/>
</dbReference>
<dbReference type="GO" id="GO:0043524">
    <property type="term" value="P:negative regulation of neuron apoptotic process"/>
    <property type="evidence" value="ECO:0000315"/>
    <property type="project" value="UniProtKB"/>
</dbReference>
<dbReference type="GO" id="GO:0021772">
    <property type="term" value="P:olfactory bulb development"/>
    <property type="evidence" value="ECO:0000315"/>
    <property type="project" value="UniProtKB"/>
</dbReference>
<dbReference type="GO" id="GO:0008284">
    <property type="term" value="P:positive regulation of cell population proliferation"/>
    <property type="evidence" value="ECO:0000250"/>
    <property type="project" value="UniProtKB"/>
</dbReference>
<dbReference type="GO" id="GO:0032467">
    <property type="term" value="P:positive regulation of cytokinesis"/>
    <property type="evidence" value="ECO:0000250"/>
    <property type="project" value="UniProtKB"/>
</dbReference>
<dbReference type="GO" id="GO:0043161">
    <property type="term" value="P:proteasome-mediated ubiquitin-dependent protein catabolic process"/>
    <property type="evidence" value="ECO:0000250"/>
    <property type="project" value="UniProtKB"/>
</dbReference>
<dbReference type="GO" id="GO:0030155">
    <property type="term" value="P:regulation of cell adhesion"/>
    <property type="evidence" value="ECO:0000266"/>
    <property type="project" value="MGI"/>
</dbReference>
<dbReference type="GO" id="GO:0001558">
    <property type="term" value="P:regulation of cell growth"/>
    <property type="evidence" value="ECO:0000250"/>
    <property type="project" value="UniProtKB"/>
</dbReference>
<dbReference type="GO" id="GO:1903429">
    <property type="term" value="P:regulation of cell maturation"/>
    <property type="evidence" value="ECO:0000315"/>
    <property type="project" value="UniProtKB"/>
</dbReference>
<dbReference type="GO" id="GO:0030334">
    <property type="term" value="P:regulation of cell migration"/>
    <property type="evidence" value="ECO:0000266"/>
    <property type="project" value="MGI"/>
</dbReference>
<dbReference type="GO" id="GO:2000045">
    <property type="term" value="P:regulation of G1/S transition of mitotic cell cycle"/>
    <property type="evidence" value="ECO:0000250"/>
    <property type="project" value="UniProtKB"/>
</dbReference>
<dbReference type="GO" id="GO:0010389">
    <property type="term" value="P:regulation of G2/M transition of mitotic cell cycle"/>
    <property type="evidence" value="ECO:0000250"/>
    <property type="project" value="UniProtKB"/>
</dbReference>
<dbReference type="GO" id="GO:0031641">
    <property type="term" value="P:regulation of myelination"/>
    <property type="evidence" value="ECO:0000315"/>
    <property type="project" value="UniProtKB"/>
</dbReference>
<dbReference type="GO" id="GO:0043523">
    <property type="term" value="P:regulation of neuron apoptotic process"/>
    <property type="evidence" value="ECO:0000315"/>
    <property type="project" value="UniProtKB"/>
</dbReference>
<dbReference type="GO" id="GO:0032487">
    <property type="term" value="P:regulation of Rap protein signal transduction"/>
    <property type="evidence" value="ECO:0000266"/>
    <property type="project" value="MGI"/>
</dbReference>
<dbReference type="GO" id="GO:0031146">
    <property type="term" value="P:SCF-dependent proteasomal ubiquitin-dependent protein catabolic process"/>
    <property type="evidence" value="ECO:0000250"/>
    <property type="project" value="UniProtKB"/>
</dbReference>
<dbReference type="GO" id="GO:0034446">
    <property type="term" value="P:substrate adhesion-dependent cell spreading"/>
    <property type="evidence" value="ECO:0000266"/>
    <property type="project" value="MGI"/>
</dbReference>
<dbReference type="CDD" id="cd22707">
    <property type="entry name" value="FHA_KIF14"/>
    <property type="match status" value="1"/>
</dbReference>
<dbReference type="CDD" id="cd01365">
    <property type="entry name" value="KISc_KIF1A_KIF1B"/>
    <property type="match status" value="1"/>
</dbReference>
<dbReference type="FunFam" id="2.60.200.20:FF:000020">
    <property type="entry name" value="Kinesin family member 14"/>
    <property type="match status" value="1"/>
</dbReference>
<dbReference type="FunFam" id="3.40.850.10:FF:000042">
    <property type="entry name" value="Kinesin family member 14"/>
    <property type="match status" value="1"/>
</dbReference>
<dbReference type="Gene3D" id="2.60.200.20">
    <property type="match status" value="1"/>
</dbReference>
<dbReference type="Gene3D" id="3.40.850.10">
    <property type="entry name" value="Kinesin motor domain"/>
    <property type="match status" value="1"/>
</dbReference>
<dbReference type="InterPro" id="IPR056523">
    <property type="entry name" value="4HB_KIF14"/>
</dbReference>
<dbReference type="InterPro" id="IPR000253">
    <property type="entry name" value="FHA_dom"/>
</dbReference>
<dbReference type="InterPro" id="IPR032405">
    <property type="entry name" value="Kinesin_assoc"/>
</dbReference>
<dbReference type="InterPro" id="IPR019821">
    <property type="entry name" value="Kinesin_motor_CS"/>
</dbReference>
<dbReference type="InterPro" id="IPR001752">
    <property type="entry name" value="Kinesin_motor_dom"/>
</dbReference>
<dbReference type="InterPro" id="IPR036961">
    <property type="entry name" value="Kinesin_motor_dom_sf"/>
</dbReference>
<dbReference type="InterPro" id="IPR027417">
    <property type="entry name" value="P-loop_NTPase"/>
</dbReference>
<dbReference type="InterPro" id="IPR008984">
    <property type="entry name" value="SMAD_FHA_dom_sf"/>
</dbReference>
<dbReference type="PANTHER" id="PTHR47117:SF7">
    <property type="entry name" value="KINESIN-LIKE PROTEIN KIF14"/>
    <property type="match status" value="1"/>
</dbReference>
<dbReference type="PANTHER" id="PTHR47117">
    <property type="entry name" value="STAR-RELATED LIPID TRANSFER PROTEIN 9"/>
    <property type="match status" value="1"/>
</dbReference>
<dbReference type="Pfam" id="PF23313">
    <property type="entry name" value="4HB_KIF14"/>
    <property type="match status" value="1"/>
</dbReference>
<dbReference type="Pfam" id="PF00498">
    <property type="entry name" value="FHA"/>
    <property type="match status" value="1"/>
</dbReference>
<dbReference type="Pfam" id="PF00225">
    <property type="entry name" value="Kinesin"/>
    <property type="match status" value="1"/>
</dbReference>
<dbReference type="Pfam" id="PF16183">
    <property type="entry name" value="Kinesin_assoc"/>
    <property type="match status" value="1"/>
</dbReference>
<dbReference type="PRINTS" id="PR00380">
    <property type="entry name" value="KINESINHEAVY"/>
</dbReference>
<dbReference type="SMART" id="SM00240">
    <property type="entry name" value="FHA"/>
    <property type="match status" value="1"/>
</dbReference>
<dbReference type="SMART" id="SM00129">
    <property type="entry name" value="KISc"/>
    <property type="match status" value="1"/>
</dbReference>
<dbReference type="SUPFAM" id="SSF52540">
    <property type="entry name" value="P-loop containing nucleoside triphosphate hydrolases"/>
    <property type="match status" value="1"/>
</dbReference>
<dbReference type="SUPFAM" id="SSF49879">
    <property type="entry name" value="SMAD/FHA domain"/>
    <property type="match status" value="1"/>
</dbReference>
<dbReference type="PROSITE" id="PS50006">
    <property type="entry name" value="FHA_DOMAIN"/>
    <property type="match status" value="1"/>
</dbReference>
<dbReference type="PROSITE" id="PS00411">
    <property type="entry name" value="KINESIN_MOTOR_1"/>
    <property type="match status" value="1"/>
</dbReference>
<dbReference type="PROSITE" id="PS50067">
    <property type="entry name" value="KINESIN_MOTOR_2"/>
    <property type="match status" value="1"/>
</dbReference>
<comment type="function">
    <text evidence="1 6 7 8">Microtubule motor protein that binds to microtubules with high affinity through each tubulin heterodimer and has an ATPase activity (PubMed:24949858). Plays a role in many processes like cell division, cytokinesis and also in cell proliferation and apoptosis (By similarity). During cytokinesis, targets to central spindle and midbody through its interaction with PRC1 and CIT respectively (By similarity). Regulates cell growth through regulation of cell cycle progression and cytokinesis. During cell cycle progression acts through SCF-dependent proteasomal ubiquitin-dependent protein catabolic process which controls CDKN1B degradation, resulting in positive regulation of cyclins, including CCNE1, CCND1 and CCNB1 (By similarity). During late neurogenesis, regulates the cerebellar and cerebral cortex development and olfactory bulb development through regulation of apoptosis, cell proliferation and cell division (PubMed:23308235, PubMed:24931760). Also is required for chromosome congression and alignment during mitotic cell cycle process (By similarity). Regulates cell spreading, focal adhesion dynamics, and cell migration through its interaction with RADIL resulting in regulation of RAP1A-mediated inside-out integrin activation by tethering RADIL on microtubules (By similarity).</text>
</comment>
<comment type="biophysicochemical properties">
    <kinetics>
        <KM evidence="8">62 uM for ATP</KM>
        <KM evidence="8">33 uM for ATP (in the presence of microtubule)</KM>
    </kinetics>
</comment>
<comment type="subunit">
    <text evidence="1">Directly interacts with PRC1 within a complex also containing KIF4A, KIF20A and KIF23; targets to the central spindle. Directly interacts with CIT depending on the activation state of the kinase (stronger interaction with the kinase-dead form); targets to the midbody. Interacts with ARRB2; the interaction is detected in the nucleus upon OR1D2 stimulation (By similarity). Interacts with AKT1; the interaction is detected in the plasma membrane upon INS stimulation and promotes AKT1 phosphorylation. Interacts with SVIL; at midbody during cytokinesis. Interacts with RADIL (via PDZ domain); recruits RADIL to the microtubule network restricting RADIL from interaction with activated RAP1A.</text>
</comment>
<comment type="subcellular location">
    <subcellularLocation>
        <location evidence="1">Nucleus</location>
    </subcellularLocation>
    <subcellularLocation>
        <location evidence="1">Cytoplasm</location>
    </subcellularLocation>
    <subcellularLocation>
        <location evidence="1">Cytoplasm</location>
        <location evidence="1">Cytoskeleton</location>
        <location evidence="1">Spindle</location>
    </subcellularLocation>
    <subcellularLocation>
        <location evidence="1">Midbody</location>
    </subcellularLocation>
    <text evidence="1">Nuclear localization observed during interphase. Nuclear localization triggered by entry into mitosis. Cytoplasmic in interphase. Cytoplasmic in metaphase cells. From prophase to metaphase, accumulates at the developing spindle poles and their associated microtubules. During anaphase, accumulates at the spindle midzone. Localization to the central spindle and midbody during anaphase is dependent upon PRC1 and CIT presence. In cells ready to undergo abscission, concentrates at the contractile ring.</text>
</comment>
<comment type="domain">
    <text evidence="8">The kinesin motor domain binds to microtubules with high affinity and has a robust ATPase activity but a very slow motility. The kinesin motor domain protects microtubules from cold depolymerization. Binds to each tubulin heterodimer resulting in a microtubule complexes. Binds at the tubulin intradimer interface, at the crest of the protofilament, and orients slightly toward the next protofilament.</text>
</comment>
<comment type="disruption phenotype">
    <text evidence="6">The lag homozygous mutant mice that lack detectable Kif14 expression are indistinguishable from normal littermates at birth. At P10, mutants exhibit an overt ataxic phenotype that increased in severity over time. At P12, lag homozygous mutant mice are unable to stand for 10 s on a narrow platform. Their gait is wide and uncoordinated, and they frequently fell on their backs while walking. These defects in voluntary movement control, posture and balance are accompanied by progressive weakness and failure to gain body weight. By P14, the homozygous mutants in a litter could be identified by their small size and uncontrolled movements. The homozygous mutants all died by P21. The lag homozygous mutant mice also display a flathead, a reduction in brain size, slender optic nerves, and a translucent spinal cord.</text>
</comment>
<comment type="similarity">
    <text evidence="4">Belongs to the TRAFAC class myosin-kinesin ATPase superfamily. Kinesin family.</text>
</comment>
<reference key="1">
    <citation type="journal article" date="2013" name="PLoS ONE">
        <title>Kif14 mutation causes severe brain malformation and hypomyelination.</title>
        <authorList>
            <person name="Fujikura K."/>
            <person name="Setsu T."/>
            <person name="Tanigaki K."/>
            <person name="Abe T."/>
            <person name="Kiyonari H."/>
            <person name="Terashima T."/>
            <person name="Sakisaka T."/>
        </authorList>
    </citation>
    <scope>NUCLEOTIDE SEQUENCE [MRNA]</scope>
    <scope>FUNCTION</scope>
    <scope>DISRUPTION PHENOTYPE</scope>
    <source>
        <strain>C57BL/6J</strain>
    </source>
</reference>
<reference key="2">
    <citation type="journal article" date="2009" name="PLoS Biol.">
        <title>Lineage-specific biology revealed by a finished genome assembly of the mouse.</title>
        <authorList>
            <person name="Church D.M."/>
            <person name="Goodstadt L."/>
            <person name="Hillier L.W."/>
            <person name="Zody M.C."/>
            <person name="Goldstein S."/>
            <person name="She X."/>
            <person name="Bult C.J."/>
            <person name="Agarwala R."/>
            <person name="Cherry J.L."/>
            <person name="DiCuccio M."/>
            <person name="Hlavina W."/>
            <person name="Kapustin Y."/>
            <person name="Meric P."/>
            <person name="Maglott D."/>
            <person name="Birtle Z."/>
            <person name="Marques A.C."/>
            <person name="Graves T."/>
            <person name="Zhou S."/>
            <person name="Teague B."/>
            <person name="Potamousis K."/>
            <person name="Churas C."/>
            <person name="Place M."/>
            <person name="Herschleb J."/>
            <person name="Runnheim R."/>
            <person name="Forrest D."/>
            <person name="Amos-Landgraf J."/>
            <person name="Schwartz D.C."/>
            <person name="Cheng Z."/>
            <person name="Lindblad-Toh K."/>
            <person name="Eichler E.E."/>
            <person name="Ponting C.P."/>
        </authorList>
    </citation>
    <scope>NUCLEOTIDE SEQUENCE [LARGE SCALE GENOMIC DNA]</scope>
    <source>
        <strain>C57BL/6J</strain>
    </source>
</reference>
<reference key="3">
    <citation type="journal article" date="2014" name="Neuroscience">
        <title>Cytoarchitecture of the olfactory bulb in the laggard mutant mouse.</title>
        <authorList>
            <person name="Yunus J."/>
            <person name="Setsu T."/>
            <person name="Kikkawa S."/>
            <person name="Sakisaka T."/>
            <person name="Terashima T."/>
        </authorList>
    </citation>
    <scope>FUNCTION</scope>
</reference>
<reference key="4">
    <citation type="journal article" date="2014" name="J. Mol. Biol.">
        <title>KIF14 binds tightly to microtubules and adopts a rigor-like conformation.</title>
        <authorList>
            <person name="Arora K."/>
            <person name="Talje L."/>
            <person name="Asenjo A.B."/>
            <person name="Andersen P."/>
            <person name="Atchia K."/>
            <person name="Joshi M."/>
            <person name="Sosa H."/>
            <person name="Allingham J.S."/>
            <person name="Kwok B.H."/>
        </authorList>
    </citation>
    <scope>X-RAY CRYSTALLOGRAPHY (2.71 ANGSTROMS) OF 390-738 IN COMPLEX WITH ADP</scope>
    <scope>BIOPHYSICOCHEMICAL PROPERTIES</scope>
    <scope>FUNCTION</scope>
</reference>
<evidence type="ECO:0000250" key="1">
    <source>
        <dbReference type="UniProtKB" id="Q15058"/>
    </source>
</evidence>
<evidence type="ECO:0000255" key="2"/>
<evidence type="ECO:0000255" key="3">
    <source>
        <dbReference type="PROSITE-ProRule" id="PRU00086"/>
    </source>
</evidence>
<evidence type="ECO:0000255" key="4">
    <source>
        <dbReference type="PROSITE-ProRule" id="PRU00283"/>
    </source>
</evidence>
<evidence type="ECO:0000256" key="5">
    <source>
        <dbReference type="SAM" id="MobiDB-lite"/>
    </source>
</evidence>
<evidence type="ECO:0000269" key="6">
    <source>
    </source>
</evidence>
<evidence type="ECO:0000269" key="7">
    <source>
    </source>
</evidence>
<evidence type="ECO:0000269" key="8">
    <source>
    </source>
</evidence>
<evidence type="ECO:0000303" key="9">
    <source>
    </source>
</evidence>
<evidence type="ECO:0000305" key="10"/>
<evidence type="ECO:0000312" key="11">
    <source>
        <dbReference type="EMBL" id="BAM74185.1"/>
    </source>
</evidence>
<evidence type="ECO:0000312" key="12">
    <source>
        <dbReference type="MGI" id="MGI:1098226"/>
    </source>
</evidence>
<evidence type="ECO:0007744" key="13">
    <source>
        <dbReference type="PDB" id="4OZQ"/>
    </source>
</evidence>
<evidence type="ECO:0007829" key="14">
    <source>
        <dbReference type="PDB" id="6WWG"/>
    </source>
</evidence>
<evidence type="ECO:0007829" key="15">
    <source>
        <dbReference type="PDB" id="6WWM"/>
    </source>
</evidence>
<evidence type="ECO:0007829" key="16">
    <source>
        <dbReference type="PDB" id="6WWN"/>
    </source>
</evidence>
<evidence type="ECO:0007829" key="17">
    <source>
        <dbReference type="PDB" id="6WWO"/>
    </source>
</evidence>
<evidence type="ECO:0007829" key="18">
    <source>
        <dbReference type="PDB" id="6WWR"/>
    </source>
</evidence>
<evidence type="ECO:0007829" key="19">
    <source>
        <dbReference type="PDB" id="6WWU"/>
    </source>
</evidence>
<feature type="chain" id="PRO_0000431706" description="Kinesin-like protein KIF14">
    <location>
        <begin position="1"/>
        <end position="1674"/>
    </location>
</feature>
<feature type="domain" description="Kinesin motor" evidence="4">
    <location>
        <begin position="393"/>
        <end position="736"/>
    </location>
</feature>
<feature type="domain" description="FHA" evidence="3">
    <location>
        <begin position="860"/>
        <end position="911"/>
    </location>
</feature>
<feature type="region of interest" description="Required for PRC1-binding" evidence="1">
    <location>
        <begin position="1"/>
        <end position="391"/>
    </location>
</feature>
<feature type="region of interest" description="Disordered" evidence="5">
    <location>
        <begin position="132"/>
        <end position="158"/>
    </location>
</feature>
<feature type="region of interest" description="Disordered" evidence="5">
    <location>
        <begin position="171"/>
        <end position="374"/>
    </location>
</feature>
<feature type="region of interest" description="Required for microtubule-binding with high affinity" evidence="8">
    <location>
        <begin position="391"/>
        <end position="772"/>
    </location>
</feature>
<feature type="region of interest" description="Required for CIT-binding" evidence="1">
    <location>
        <begin position="936"/>
        <end position="1674"/>
    </location>
</feature>
<feature type="region of interest" description="Disordered" evidence="5">
    <location>
        <begin position="1618"/>
        <end position="1674"/>
    </location>
</feature>
<feature type="coiled-coil region" evidence="2">
    <location>
        <begin position="743"/>
        <end position="826"/>
    </location>
</feature>
<feature type="coiled-coil region" evidence="2">
    <location>
        <begin position="961"/>
        <end position="1110"/>
    </location>
</feature>
<feature type="compositionally biased region" description="Polar residues" evidence="5">
    <location>
        <begin position="142"/>
        <end position="151"/>
    </location>
</feature>
<feature type="compositionally biased region" description="Polar residues" evidence="5">
    <location>
        <begin position="202"/>
        <end position="214"/>
    </location>
</feature>
<feature type="compositionally biased region" description="Basic and acidic residues" evidence="5">
    <location>
        <begin position="267"/>
        <end position="279"/>
    </location>
</feature>
<feature type="compositionally biased region" description="Polar residues" evidence="5">
    <location>
        <begin position="302"/>
        <end position="311"/>
    </location>
</feature>
<feature type="compositionally biased region" description="Basic and acidic residues" evidence="5">
    <location>
        <begin position="317"/>
        <end position="329"/>
    </location>
</feature>
<feature type="compositionally biased region" description="Basic and acidic residues" evidence="5">
    <location>
        <begin position="1630"/>
        <end position="1642"/>
    </location>
</feature>
<feature type="compositionally biased region" description="Polar residues" evidence="5">
    <location>
        <begin position="1660"/>
        <end position="1674"/>
    </location>
</feature>
<feature type="binding site" evidence="4 13">
    <location>
        <begin position="482"/>
        <end position="489"/>
    </location>
    <ligand>
        <name>ATP</name>
        <dbReference type="ChEBI" id="CHEBI:30616"/>
    </ligand>
</feature>
<feature type="modified residue" description="Phosphoserine" evidence="1">
    <location>
        <position position="257"/>
    </location>
</feature>
<feature type="modified residue" description="Phosphothreonine" evidence="1">
    <location>
        <position position="262"/>
    </location>
</feature>
<feature type="modified residue" description="Phosphoserine" evidence="1">
    <location>
        <position position="973"/>
    </location>
</feature>
<feature type="modified residue" description="Phosphoserine" evidence="1">
    <location>
        <position position="1326"/>
    </location>
</feature>
<feature type="strand" evidence="17">
    <location>
        <begin position="391"/>
        <end position="393"/>
    </location>
</feature>
<feature type="strand" evidence="18">
    <location>
        <begin position="394"/>
        <end position="400"/>
    </location>
</feature>
<feature type="helix" evidence="18">
    <location>
        <begin position="405"/>
        <end position="410"/>
    </location>
</feature>
<feature type="strand" evidence="18">
    <location>
        <begin position="416"/>
        <end position="418"/>
    </location>
</feature>
<feature type="strand" evidence="16">
    <location>
        <begin position="419"/>
        <end position="421"/>
    </location>
</feature>
<feature type="strand" evidence="18">
    <location>
        <begin position="423"/>
        <end position="426"/>
    </location>
</feature>
<feature type="strand" evidence="15">
    <location>
        <begin position="428"/>
        <end position="431"/>
    </location>
</feature>
<feature type="strand" evidence="18">
    <location>
        <begin position="433"/>
        <end position="436"/>
    </location>
</feature>
<feature type="strand" evidence="18">
    <location>
        <begin position="439"/>
        <end position="443"/>
    </location>
</feature>
<feature type="strand" evidence="19">
    <location>
        <begin position="445"/>
        <end position="449"/>
    </location>
</feature>
<feature type="helix" evidence="18">
    <location>
        <begin position="456"/>
        <end position="459"/>
    </location>
</feature>
<feature type="turn" evidence="18">
    <location>
        <begin position="460"/>
        <end position="463"/>
    </location>
</feature>
<feature type="helix" evidence="18">
    <location>
        <begin position="464"/>
        <end position="471"/>
    </location>
</feature>
<feature type="strand" evidence="18">
    <location>
        <begin position="475"/>
        <end position="482"/>
    </location>
</feature>
<feature type="strand" evidence="14">
    <location>
        <begin position="484"/>
        <end position="487"/>
    </location>
</feature>
<feature type="helix" evidence="18">
    <location>
        <begin position="488"/>
        <end position="491"/>
    </location>
</feature>
<feature type="strand" evidence="17">
    <location>
        <begin position="492"/>
        <end position="494"/>
    </location>
</feature>
<feature type="strand" evidence="18">
    <location>
        <begin position="496"/>
        <end position="499"/>
    </location>
</feature>
<feature type="helix" evidence="18">
    <location>
        <begin position="501"/>
        <end position="516"/>
    </location>
</feature>
<feature type="strand" evidence="18">
    <location>
        <begin position="519"/>
        <end position="533"/>
    </location>
</feature>
<feature type="strand" evidence="18">
    <location>
        <begin position="536"/>
        <end position="539"/>
    </location>
</feature>
<feature type="strand" evidence="18">
    <location>
        <begin position="546"/>
        <end position="548"/>
    </location>
</feature>
<feature type="strand" evidence="18">
    <location>
        <begin position="556"/>
        <end position="559"/>
    </location>
</feature>
<feature type="turn" evidence="18">
    <location>
        <begin position="560"/>
        <end position="562"/>
    </location>
</feature>
<feature type="strand" evidence="18">
    <location>
        <begin position="563"/>
        <end position="566"/>
    </location>
</feature>
<feature type="strand" evidence="18">
    <location>
        <begin position="572"/>
        <end position="576"/>
    </location>
</feature>
<feature type="helix" evidence="18">
    <location>
        <begin position="577"/>
        <end position="579"/>
    </location>
</feature>
<feature type="helix" evidence="18">
    <location>
        <begin position="580"/>
        <end position="588"/>
    </location>
</feature>
<feature type="strand" evidence="15">
    <location>
        <begin position="596"/>
        <end position="598"/>
    </location>
</feature>
<feature type="strand" evidence="18">
    <location>
        <begin position="600"/>
        <end position="603"/>
    </location>
</feature>
<feature type="strand" evidence="18">
    <location>
        <begin position="605"/>
        <end position="617"/>
    </location>
</feature>
<feature type="strand" evidence="18">
    <location>
        <begin position="621"/>
        <end position="623"/>
    </location>
</feature>
<feature type="strand" evidence="18">
    <location>
        <begin position="629"/>
        <end position="637"/>
    </location>
</feature>
<feature type="turn" evidence="18">
    <location>
        <begin position="645"/>
        <end position="647"/>
    </location>
</feature>
<feature type="helix" evidence="18">
    <location>
        <begin position="653"/>
        <end position="679"/>
    </location>
</feature>
<feature type="helix" evidence="15">
    <location>
        <begin position="688"/>
        <end position="690"/>
    </location>
</feature>
<feature type="helix" evidence="18">
    <location>
        <begin position="692"/>
        <end position="696"/>
    </location>
</feature>
<feature type="helix" evidence="18">
    <location>
        <begin position="698"/>
        <end position="700"/>
    </location>
</feature>
<feature type="strand" evidence="18">
    <location>
        <begin position="701"/>
        <end position="713"/>
    </location>
</feature>
<feature type="helix" evidence="18">
    <location>
        <begin position="717"/>
        <end position="719"/>
    </location>
</feature>
<feature type="helix" evidence="18">
    <location>
        <begin position="720"/>
        <end position="731"/>
    </location>
</feature>
<feature type="strand" evidence="17">
    <location>
        <begin position="737"/>
        <end position="740"/>
    </location>
</feature>
<feature type="turn" evidence="14">
    <location>
        <begin position="747"/>
        <end position="749"/>
    </location>
</feature>
<feature type="helix" evidence="14">
    <location>
        <begin position="751"/>
        <end position="754"/>
    </location>
</feature>
<organism evidence="11">
    <name type="scientific">Mus musculus</name>
    <name type="common">Mouse</name>
    <dbReference type="NCBI Taxonomy" id="10090"/>
    <lineage>
        <taxon>Eukaryota</taxon>
        <taxon>Metazoa</taxon>
        <taxon>Chordata</taxon>
        <taxon>Craniata</taxon>
        <taxon>Vertebrata</taxon>
        <taxon>Euteleostomi</taxon>
        <taxon>Mammalia</taxon>
        <taxon>Eutheria</taxon>
        <taxon>Euarchontoglires</taxon>
        <taxon>Glires</taxon>
        <taxon>Rodentia</taxon>
        <taxon>Myomorpha</taxon>
        <taxon>Muroidea</taxon>
        <taxon>Muridae</taxon>
        <taxon>Murinae</taxon>
        <taxon>Mus</taxon>
        <taxon>Mus</taxon>
    </lineage>
</organism>
<proteinExistence type="evidence at protein level"/>
<accession>L0N7N1</accession>
<name>KIF14_MOUSE</name>
<keyword id="KW-0002">3D-structure</keyword>
<keyword id="KW-0067">ATP-binding</keyword>
<keyword id="KW-0175">Coiled coil</keyword>
<keyword id="KW-0963">Cytoplasm</keyword>
<keyword id="KW-0206">Cytoskeleton</keyword>
<keyword id="KW-0493">Microtubule</keyword>
<keyword id="KW-0505">Motor protein</keyword>
<keyword id="KW-0547">Nucleotide-binding</keyword>
<keyword id="KW-0539">Nucleus</keyword>
<keyword id="KW-0597">Phosphoprotein</keyword>
<keyword id="KW-1185">Reference proteome</keyword>
<sequence length="1674" mass="186445">MSVHTSHSRHNIGSLEVSSSQKISASSGLVHSSRLELHLKADMSECENHDPFVNAGSKTIDINSTYVISACKKTRETPVTSDPRRLSLQRRATCGDRESSLLGSELGNRRTADTSLRLQRRHGRADYVGKWETLNPVGGNPGSDSASQASRTEAKGVNNDTRVLSSVVSVKDSNDTGLTRCKDPGPPVGASNEKVTVKDTNSRAPVGSQRQTEAMRSGHLVVQLTESKSDTPVSGGRNSHRGNAGKDTAKQVGTFGSSDTRTPVKCVLEHRWTPRHDPPPPKSPALSTPKNNGKDIPKHGSTFRSASSESRTPVKCVPEHRWTPRHDLPPPKSPALSTLKNRIASPRVKPRPKSSLFANKRESSRESTLPPEENSLVQKTFTEPDSLKVENSQVTVAVRVRPFSKREKTEKASQVVFTNGEEITVEHPDMKQVYSFIYDVSFWSFDECHPGYASQTTVYETLAAPLLDRAFEGYNTCLFAYGQTGSGKSYTMMGLNEEPGIIPRFCEDLFAQIAKKQTSEVSYHLEMSFFEVYNEKIHDLLVCKGENGQRKQPLRAREHPVSGPYVEGLSMNVVSSYSDIQSWLELGNKQRATAATGMNDKSSRSHSVFTLVMTQTKTEVVEGEEHDHRITSRINLVDLAGSERCSTAHSSGQRLKEGVSINKSLLTLGKVISALSEQANGKRVFIPYRESTLTWLLKESLGGNSKTAMIATVSPAASNIEETLSTLRYATQARLIVNIAKVNEDMNAKLIRELKAEIEKLKAAQRSNRNIDPERYRLCRQEITSLRMKLHQQERDMAEIQRVWKEKFEQAEKRKLQETKELQKAGVTFQMDNHLPNLVNLNEDPQLSEMLLYMVKEGVTTVGKHTPSSSHDIQLSGVLIADDHCTIRNFGGTVSIVPAGEAKTYVNGTHISEPTVLHHGDRVVLGGDHYFRFNHPVEVQKGKKLSSRNNLTTSEGPKDFEFAKNELLTAQRSRLEAEIKDAQLKAKEEMMQGIQIAKEMAQQELSSQKAVYERKIQALEAELREESQRKRLEELNNQKASHKIEELERAKQHLEQEVYVNKRRLEMETLATKQALEDHRIRHARILEALEIEKQKIAEEVQMLQENRGNRDKTFTIQPNWNSMKLSTMIQEANAISDKFKKCYIFGRHDASDKGRSDTSVRVRNLQLGISTFWSLEKFESKLAAMKELYESNGGDRDEDVFCDPADEWEPDITSTPVSSLSRRRSRSLMKNRRVSGCLHDIHPIQSMQSSHSSGLMEKPSTIYSNSSESFLPGICKELIGSSIDFLGQSFDEEKTIADSLINNLLRLHNGVIAISKAHEEQDEESQDNLFSDRAAQALTIQVACAFEQLVVLFKHWLGDFLPCTGSARLEDELRQDIKKLGGYLQLFLQGCCSDISSMVKEAQNKVMKIIQQAVQCVGQLAVLKGSKLCVLENSSKVSSTQEFMAALQDGVTSGMKSLLDSGLETAQDLRQDLSRQSAREEVTKQMKASTVEWVGSLENAVAEWRTKSFRTQAQEGSRQQVSKLLSLASEFLKLKSCLQQTVEMIVSALRGCPSDLHCLRSCTETICSLARKLHSDFSAHSASAGSCGNELPRADCEELESLAKSLLLCFECGESPGLSKPWESCSSNSKEEQCKSDRADCGKSGPRRACEPHGDATPAVSSGDCTPNRIQWV</sequence>